<evidence type="ECO:0000250" key="1">
    <source>
        <dbReference type="UniProtKB" id="P23009"/>
    </source>
</evidence>
<evidence type="ECO:0000255" key="2"/>
<evidence type="ECO:0000269" key="3">
    <source>
    </source>
</evidence>
<evidence type="ECO:0000269" key="4">
    <source>
    </source>
</evidence>
<evidence type="ECO:0000269" key="5">
    <source>
    </source>
</evidence>
<evidence type="ECO:0000269" key="6">
    <source>
    </source>
</evidence>
<evidence type="ECO:0000269" key="7">
    <source>
    </source>
</evidence>
<evidence type="ECO:0000269" key="8">
    <source>
    </source>
</evidence>
<evidence type="ECO:0000269" key="9">
    <source>
    </source>
</evidence>
<evidence type="ECO:0000269" key="10">
    <source>
    </source>
</evidence>
<evidence type="ECO:0000269" key="11">
    <source>
    </source>
</evidence>
<evidence type="ECO:0000269" key="12">
    <source>
    </source>
</evidence>
<evidence type="ECO:0000269" key="13">
    <source>
    </source>
</evidence>
<evidence type="ECO:0000269" key="14">
    <source>
    </source>
</evidence>
<evidence type="ECO:0000269" key="15">
    <source>
    </source>
</evidence>
<evidence type="ECO:0000269" key="16">
    <source>
    </source>
</evidence>
<evidence type="ECO:0000269" key="17">
    <source>
    </source>
</evidence>
<evidence type="ECO:0000269" key="18">
    <source>
    </source>
</evidence>
<evidence type="ECO:0000269" key="19">
    <source>
    </source>
</evidence>
<evidence type="ECO:0000269" key="20">
    <source>
    </source>
</evidence>
<evidence type="ECO:0000269" key="21">
    <source>
    </source>
</evidence>
<evidence type="ECO:0000305" key="22"/>
<evidence type="ECO:0000305" key="23">
    <source>
    </source>
</evidence>
<evidence type="ECO:0007744" key="24">
    <source>
        <dbReference type="PDB" id="2BFU"/>
    </source>
</evidence>
<evidence type="ECO:0007744" key="25">
    <source>
        <dbReference type="PDB" id="5A32"/>
    </source>
</evidence>
<evidence type="ECO:0007744" key="26">
    <source>
        <dbReference type="PDB" id="5A33"/>
    </source>
</evidence>
<evidence type="ECO:0007744" key="27">
    <source>
        <dbReference type="PDB" id="5FMO"/>
    </source>
</evidence>
<evidence type="ECO:0007829" key="28">
    <source>
        <dbReference type="PDB" id="1NY7"/>
    </source>
</evidence>
<evidence type="ECO:0007829" key="29">
    <source>
        <dbReference type="PDB" id="5A32"/>
    </source>
</evidence>
<evidence type="ECO:0007829" key="30">
    <source>
        <dbReference type="PDB" id="5A33"/>
    </source>
</evidence>
<evidence type="ECO:0007829" key="31">
    <source>
        <dbReference type="PDB" id="5FMO"/>
    </source>
</evidence>
<comment type="function">
    <molecule>VP58</molecule>
    <text evidence="1">Responsible for viral RNA2 accumulation. May function by recruiting the RNA1-encoded polyprotein that contains the replication protein to RNA2 and enable its replication.</text>
</comment>
<comment type="function">
    <molecule>Movement protein</molecule>
    <text evidence="8 10 11 21 23">Transports the viral genome to neighboring plant cells directly through plasmosdesmata, without any budding (PubMed:9501035). The movement protein allows efficient cell to cell propagation, by bypassing the host cell wall barrier. Acts by forming a tubular structure at the host plasmodesmata, enlarging it enough to allow free passage of virion capsids (Probable) (PubMed:12556992, PubMed:14579172). Binds to GTP and to single-stranded RNA and single-stranded DNA in a non-sequence-specific manner (PubMed:14722313).</text>
</comment>
<comment type="function">
    <molecule>Large capsid protein</molecule>
    <text evidence="4 15 16 18">Together with the mature small capsid protein, forms an icosahedral capsid (T=3) enclosing the viral positive strand RNA genome, with a diameter of approximately 300 Angstroms (PubMed:10603314, PubMed:26657148, PubMed:27021160, PubMed:28373698). The capsid is formed from 60 copies each of the large and the small capsid protein (PubMed:10603314, PubMed:26657148, PubMed:27021160, PubMed:28373698). The large capsid protein interacts with the viral RNA (PubMed:26657148, PubMed:28373698).</text>
</comment>
<comment type="function">
    <molecule>Mature small capsid protein</molecule>
    <text evidence="4 15 16 18">Together with the large capsid protein, forms an icosahedral capsid (T=3) enclosing the viral positive strand RNA genome, with a diameter of approximately 300 Angstroms. The capsid is formed from 60 copies each of the large and the small capsid protein. The mature small capsid protein forms the turrets at the fivefold axes of the viral particle.</text>
</comment>
<comment type="function">
    <molecule>Small capsid protein precursor</molecule>
    <text evidence="3 12 13 15">The cleavable C-terminus of small capsid protein seems to be involved in viral assembly and RNA packaging (PubMed:10049828). After virus assembly, these amino acids are cleaved off during the normal maturation of the virus (PubMed:10049828, PubMed:26657148). Also seems to act as suppressor of post-transcriptional gene silencing (PTGS), a mechanism of plant viral defense that limits the accumulation of viral RNAs (PubMed:15165817, PubMed:15483261).</text>
</comment>
<comment type="function">
    <molecule>Small capsid protein C-terminus part</molecule>
    <text evidence="12 13">Acts as a suppressor of RNA-mediated gene silencing, also known as post-transcriptional gene silencing (PTGS), a mechanism of plant viral defense that limits the accumulation of viral RNAs.</text>
</comment>
<comment type="subunit">
    <molecule>Mature small capsid protein</molecule>
    <text evidence="4 15">Interacts with the large capsid protein (PubMed:10603314, PubMed:26657148).</text>
</comment>
<comment type="subunit">
    <molecule>Large capsid protein</molecule>
    <text evidence="9 15 16 18">Interacts with the mature small capsid protein (PubMed:10603314, PubMed:26657148, PubMed:27021160, PubMed:28373698). Homomultimer; assembles as pentons (PubMed:26657148, PubMed:27021160, PubMed:28373698). Interacts with the movement protein (via C-terminus) (PubMed:12867661).</text>
</comment>
<comment type="subunit">
    <molecule>Movement protein</molecule>
    <text evidence="9">Interacts (via C-terminus) with the large capsid protein (PubMed:12867661).</text>
</comment>
<comment type="subcellular location">
    <molecule>VP58</molecule>
    <subcellularLocation>
        <location evidence="20">Host nucleus</location>
    </subcellularLocation>
</comment>
<comment type="subcellular location">
    <molecule>Movement protein</molecule>
    <subcellularLocation>
        <location evidence="10 17">Host cell junction</location>
        <location evidence="10 17">Host plasmodesma</location>
    </subcellularLocation>
    <text evidence="7 10 17">Assembles in tubules that are embedded within modified plasmodesmata.</text>
</comment>
<comment type="subcellular location">
    <molecule>Large capsid protein</molecule>
    <subcellularLocation>
        <location evidence="4 15 16 18">Virion</location>
    </subcellularLocation>
</comment>
<comment type="subcellular location">
    <molecule>Mature small capsid protein</molecule>
    <subcellularLocation>
        <location evidence="4 15 16 18">Virion</location>
    </subcellularLocation>
</comment>
<comment type="alternative products">
    <event type="alternative initiation"/>
    <isoform>
        <id>P03599-1</id>
        <name>1</name>
        <name>RNA2 polyprotein</name>
        <sequence type="displayed"/>
    </isoform>
    <isoform>
        <id>P03599-2</id>
        <name>2</name>
        <sequence type="described" ref="VSP_059978"/>
    </isoform>
</comment>
<comment type="domain">
    <molecule>Small capsid protein precursor</molecule>
    <text evidence="3">The C-terminus is required for efficient assembly and RNA packaging.</text>
</comment>
<comment type="domain">
    <molecule>Large capsid protein</molecule>
    <text evidence="18">Contains a beta-sheet structure called beta-barrel jelly roll.</text>
</comment>
<comment type="domain">
    <molecule>Mature small capsid protein</molecule>
    <text evidence="18">Contains a beta-sheet structure called beta-barrel jelly roll.</text>
</comment>
<comment type="domain">
    <molecule>Movement protein</molecule>
    <text evidence="8 9">The C-terminus is involved in binding to the large capsid protein, and hence to the virion.</text>
</comment>
<comment type="PTM">
    <molecule>RNA2 polyprotein</molecule>
    <text evidence="14">Specific enzymatic cleavages by picornain 3C-like protease in vivo yield mature proteins.</text>
</comment>
<comment type="PTM">
    <molecule>Small capsid protein precursor</molecule>
    <text evidence="3 16">The C-terminal 24 amino acids of the small capsid protein are specifically cleaved by the RNA1 encoded picornain 3C-like protease during maturation.</text>
</comment>
<comment type="PTM">
    <molecule>Large capsid protein</molecule>
    <text evidence="6">Not glycosylated.</text>
</comment>
<comment type="PTM">
    <molecule>Mature small capsid protein</molecule>
    <text evidence="6">Not glycosylated.</text>
</comment>
<comment type="mass spectrometry">
    <molecule>Mature small capsid protein</molecule>
</comment>
<comment type="miscellaneous">
    <molecule>Isoform 2</molecule>
    <text evidence="22">The 2 isoforms probably arise from alternative initiation (leaky scanning).</text>
</comment>
<comment type="caution">
    <text evidence="22">It is uncertain whether Met-1 or Met-118 is the initiator.</text>
</comment>
<comment type="online information" name="Virus Particle ExploreR db">
    <link uri="https://viperdb.org/Info_Page.php?VDB=1ny7"/>
    <text>Icosahedral capsid structure</text>
</comment>
<reference key="1">
    <citation type="journal article" date="1983" name="EMBO J.">
        <title>Primary structure and gene organization of the middle-component RNA of cowpea mosaic virus.</title>
        <authorList>
            <person name="van Wezenbeek P."/>
            <person name="Verver J."/>
            <person name="Harmsen J."/>
            <person name="Vos P."/>
            <person name="van Kammen A."/>
        </authorList>
    </citation>
    <scope>NUCLEOTIDE SEQUENCE [GENOMIC RNA] (ISOFORM 1)</scope>
    <scope>ACETYLATION AT MET-460</scope>
    <source>
        <strain>SB</strain>
    </source>
</reference>
<reference key="2">
    <citation type="journal article" date="1983" name="EMBO J.">
        <title>The nucleotide sequence of cowpea mosaic virus B RNA.</title>
        <authorList>
            <person name="Lomonossoff G.P."/>
            <person name="Shanks M."/>
        </authorList>
    </citation>
    <scope>NUCLEOTIDE SEQUENCE [LARGE SCALE GENOMIC DNA] (ISOFORM 1)</scope>
    <source>
        <strain>SB</strain>
    </source>
</reference>
<reference key="3">
    <citation type="journal article" date="1982" name="J. Virol.">
        <title>Expression of Middle-Component RNA of Cowpea Mosaic Virus: In Vitro Generation of a Precursor to Both Capsid Proteins by a Bottom-Component RNA-Encoded Protease from Infected Cells.</title>
        <authorList>
            <person name="Franssen H."/>
            <person name="Goldbach R."/>
            <person name="Broekhuijsen M."/>
            <person name="Moerman M."/>
            <person name="van Kammen A."/>
        </authorList>
    </citation>
    <scope>PROTEOLYTIC CLEAVAGE (RNA2 POLYPROTEIN)</scope>
</reference>
<reference key="4">
    <citation type="journal article" date="1989" name="Virology">
        <title>Identification of the initiation codons for translation of cowpea mosaic virus middle component RNA using site-directed mutagenesis of an infectious cDNA clone.</title>
        <authorList>
            <person name="Holness C.L."/>
            <person name="Lomonossoff G.P."/>
            <person name="Evans D."/>
            <person name="Maule A.J."/>
        </authorList>
    </citation>
    <scope>ALTERNATIVE INITIATION</scope>
</reference>
<reference key="5">
    <citation type="journal article" date="1991" name="J. Gen. Virol.">
        <title>The mechanism of translation of cowpea mosaic virus middle component RNA: no evidence for internal initiation from experiments in an animal cell transient expression system.</title>
        <authorList>
            <person name="Belsham G.J."/>
            <person name="Lomonossoff G.P."/>
        </authorList>
    </citation>
    <scope>ALTERNATIVE INITIATION</scope>
</reference>
<reference key="6">
    <citation type="journal article" date="1993" name="J. Virol.">
        <title>The cowpea mosaic virus M RNA-encoded 48-kilodalton protein is responsible for induction of tubular structures in protoplasts.</title>
        <authorList>
            <person name="Wellink J."/>
            <person name="van Lent J.W."/>
            <person name="Verver J."/>
            <person name="Sijen T."/>
            <person name="Goldbach R.W."/>
            <person name="van Kammen A."/>
        </authorList>
    </citation>
    <scope>FUNCTION (MOVEMENT PROTEIN)</scope>
    <scope>SUBCELLULAR LOCATION (VP58)</scope>
</reference>
<reference key="7">
    <citation type="journal article" date="1998" name="Virology">
        <title>Studies on the movement of cowpea mosaic virus using the jellyfish green fluorescent protein.</title>
        <authorList>
            <person name="Verver J."/>
            <person name="Wellink J."/>
            <person name="Van Lent J."/>
            <person name="Gopinath K."/>
            <person name="Van Kammen A."/>
        </authorList>
    </citation>
    <scope>FUNCTION (MOVEMENT PROTEIN)</scope>
</reference>
<reference key="8">
    <citation type="journal article" date="1999" name="Virology">
        <title>The cleavable carboxyl-terminus of the small coat protein of cowpea mosaic virus is involved in RNA encapsidation.</title>
        <authorList>
            <person name="Taylor K.M."/>
            <person name="Spall V.E."/>
            <person name="Butler P.J.G."/>
            <person name="Lomonossoff G.P."/>
        </authorList>
    </citation>
    <scope>MASS SPECTROMETRY</scope>
    <scope>FUNCTION (SMALL CAPSID PROTEIN PRECURSOR)</scope>
    <scope>PROTEOLYTIC CLEAVAGE (SMALL CAPSID PROTEIN PRECURSOR)</scope>
    <scope>DOMAIN (SMALL CAPSID PROTEIN PRECURSOR)</scope>
</reference>
<reference key="9">
    <citation type="journal article" date="2000" name="J. Gen. Virol.">
        <title>Glycosylation of the capsid proteins of cowpea mosaic virus: a reinvestigation shows the absence of sugar residues.</title>
        <authorList>
            <person name="Altmann F."/>
            <person name="Lomonossoff G.P."/>
        </authorList>
    </citation>
    <scope>LACK OF GLYCOSYLATION (LARGE CAPSID PROTEIN)</scope>
    <scope>LACK OF GLYCOSYLATION (MATURE SMALL CAPSID PROTEIN)</scope>
</reference>
<reference key="10">
    <citation type="journal article" date="2000" name="Virology">
        <title>Mutational analysis of the cowpea mosaic virus movement protein.</title>
        <authorList>
            <person name="Bertens P."/>
            <person name="Wellink J."/>
            <person name="Goldbach R."/>
            <person name="van Kammen A."/>
        </authorList>
    </citation>
    <scope>MUTAGENESIS OF 126-ILE-PRO-127; 209-PRO-VAL-210; 220-SER-ASP-221; 238-ILE-GLU-239; 259-VAL-ASP-260; 279-ARG-GLY-280; 409-LEU-LYS-410 AND 448-LEU-ASP-449</scope>
</reference>
<reference key="11">
    <citation type="journal article" date="2000" name="J. Virol.">
        <title>Cowpea mosaic virus infection induces a massive proliferation of endoplasmic reticulum but not Golgi membranes and is dependent on de novo membrane synthesis.</title>
        <authorList>
            <person name="Carette J.E."/>
            <person name="Stuiver M."/>
            <person name="Van Lent J."/>
            <person name="Wellink J."/>
            <person name="Van Kammen A."/>
        </authorList>
    </citation>
    <scope>SUBCELLULAR LOCATION (MOVEMENT PROTEIN)</scope>
</reference>
<reference key="12">
    <citation type="journal article" date="2003" name="Arch. Virol.">
        <title>Studies on the C-terminus of the Cowpea mosaic virus movement protein.</title>
        <authorList>
            <person name="Bertens P."/>
            <person name="Heijne W."/>
            <person name="van der Wel N."/>
            <person name="Wellink J."/>
            <person name="van Kammen A."/>
        </authorList>
    </citation>
    <scope>DOMAIN (MOVEMENT PROTEIN)</scope>
    <scope>FUNCTION (MOVEMENT PROTEIN)</scope>
</reference>
<reference key="13">
    <citation type="journal article" date="2003" name="Arch. Virol.">
        <title>Intracellular distribution of cowpea mosaic virus movement protein as visualised by green fluorescent protein fusions.</title>
        <authorList>
            <person name="Gopinath K."/>
            <person name="Bertens P."/>
            <person name="Pouwels J."/>
            <person name="Marks H."/>
            <person name="Van Lent J."/>
            <person name="Wellink J."/>
            <person name="Van Kammen A."/>
        </authorList>
    </citation>
    <scope>SUBCELLULAR LOCATION (MOVEMENT PROTEIN)</scope>
    <scope>FUNCTION (MOVEMENT PROTEIN)</scope>
</reference>
<reference key="14">
    <citation type="journal article" date="2003" name="J. Gen. Virol.">
        <title>The C-terminal region of the movement protein of Cowpea mosaic virus is involved in binding to the large but not to the small coat protein.</title>
        <authorList>
            <person name="Carvalho C.M."/>
            <person name="Wellink J."/>
            <person name="Ribeiro S.G."/>
            <person name="Goldbach R.W."/>
            <person name="Van Lent J.W."/>
        </authorList>
    </citation>
    <scope>DOMAIN (MOVEMENT PROTEIN)</scope>
    <scope>INTERACTION WITH THE LARGE CAPSID PROTEIN (MOVEMENT PROTEIN)</scope>
    <scope>INTERACTION WITH THE MOVEMENT PROTEIN (LARGE CAPSID PROTEIN)</scope>
</reference>
<reference key="15">
    <citation type="journal article" date="2004" name="J. Gen. Virol.">
        <title>Surface-exposed C-terminal amino acids of the small coat protein of Cowpea mosaic virus are required for suppression of silencing.</title>
        <authorList>
            <person name="Canizares M.C."/>
            <person name="Taylor K.M."/>
            <person name="Lomonossoff G.P."/>
        </authorList>
    </citation>
    <scope>FUNCTION (SMALL CAPSID PROTEIN C-TERMINUS PART)</scope>
    <scope>FUNCTION (SMALL CAPSID PROTEIN PRECURSOR)</scope>
</reference>
<reference key="16">
    <citation type="journal article" date="2004" name="Virology">
        <title>Cowpea mosaic virus RNA-1 acts as an amplicon whose effects can be counteracted by a RNA-2-encoded suppressor of silencing.</title>
        <authorList>
            <person name="Liu L."/>
            <person name="Grainger J."/>
            <person name="Canizares M.C."/>
            <person name="Angell S.M."/>
            <person name="Lomonossoff G.P."/>
        </authorList>
    </citation>
    <scope>FUNCTION (SMALL CAPSID PROTEIN C-TERMINUS PART)</scope>
    <scope>FUNCTION (SMALL CAPSID PROTEIN PRECURSOR)</scope>
</reference>
<reference key="17">
    <citation type="journal article" date="2004" name="J. Virol.">
        <title>The movement protein of cowpea mosaic virus binds GTP and single-stranded nucleic acid in vitro.</title>
        <authorList>
            <person name="Carvalho C.M."/>
            <person name="Pouwels J."/>
            <person name="van Lent J.W."/>
            <person name="Bisseling T."/>
            <person name="Goldbach R.W."/>
            <person name="Wellink J."/>
        </authorList>
    </citation>
    <scope>FUNCTION (MOVEMENT PROTEIN)</scope>
    <scope>MUTAGENESIS OF VAL-259 AND ASP-260</scope>
</reference>
<reference key="18">
    <citation type="journal article" date="2016" name="Arch. Virol.">
        <title>The role of plasmodesma-located proteins in tubule-guided virus transport is limited to the plasmodesmata.</title>
        <authorList>
            <person name="den Hollander P.W."/>
            <person name="Kieper S.N."/>
            <person name="Borst J.W."/>
            <person name="van Lent J.W."/>
        </authorList>
    </citation>
    <scope>SUBCELLULAR LOCATION (MOVEMENT PROTEIN)</scope>
</reference>
<reference key="19">
    <citation type="journal article" date="1999" name="Virology">
        <title>The refined crystal structure of cowpea mosaic virus at 2.8 A resolution.</title>
        <authorList>
            <person name="Lin T."/>
            <person name="Chen Z."/>
            <person name="Usha R."/>
            <person name="Stauffacher C.V."/>
            <person name="Dai J.B."/>
            <person name="Schmidt T."/>
            <person name="Johnson J.E."/>
        </authorList>
    </citation>
    <scope>X-RAY CRYSTALLOGRAPHY (3.0 ANGSTROMS) OF 460-1022</scope>
    <scope>INTERACTION WITH THE MATURE SMALL CAPSID PROTEIN (LARGE CAPSID PROTEIN)</scope>
    <scope>INTERACTION WITH THE LARGE CAPSID PROTEIN (MATURE SMALL CAPSID PROTEIN)</scope>
    <scope>FUNCTION (LARGE CAPSID PROTEIN)</scope>
    <scope>FUNCTION (MATURE SMALL CAPSID PROTEIN)</scope>
    <scope>SUBCELLULAR LOCATION (LARGE CAPSID PROTEIN)</scope>
    <scope>SUBCELLULAR LOCATION (MATURE SMALL CAPSID PROTEIN)</scope>
    <source>
        <strain>Bi1 mutant</strain>
    </source>
</reference>
<reference evidence="24" key="20">
    <citation type="journal article" date="2006" name="Chem. Biol.">
        <title>Generation and structural analysis of reactive empty particles derived from an icosahedral virus.</title>
        <authorList>
            <person name="Ochoa W.F."/>
            <person name="Chatterji A."/>
            <person name="Lin T."/>
            <person name="Johnson J.E."/>
        </authorList>
    </citation>
    <scope>X-RAY CRYSTALLOGRAPHY (4.00 ANGSTROMS) OF 460-828 AND 834-1022</scope>
</reference>
<reference evidence="25 26" key="21">
    <citation type="journal article" date="2015" name="Nat. Commun.">
        <title>Mechanisms of assembly and genome packaging in an RNA virus revealed by high-resolution cryo-EM.</title>
        <authorList>
            <person name="Hesketh E.L."/>
            <person name="Meshcheriakova Y."/>
            <person name="Dent K.C."/>
            <person name="Saxena P."/>
            <person name="Thompson R.F."/>
            <person name="Cockburn J.J."/>
            <person name="Lomonossoff G.P."/>
            <person name="Ranson N.A."/>
        </authorList>
    </citation>
    <scope>STRUCTURE BY ELECTRON MICROSCOPY (3.04 ANGSTROMS) OF 460-828 AND 834-1046</scope>
    <scope>FUNCTION (SMALL CAPSID PROTEIN PRECURSOR)</scope>
    <scope>MUTAGENESIS OF ARG-476; TRP-649; VAL-942; GLU-980; PHE-1025; ARG-1026 AND PHE-1027</scope>
    <scope>INTERACTION WITH THE MATURE SMALL CAPSID PROTEIN (LARGE CAPSID PROTEIN)</scope>
    <scope>INTERACTION WITH THE LARGE CAPSID PROTEIN (MATURE SMALL CAPSID PROTEIN)</scope>
    <scope>SUBUNIT (LARGE CAPSID PROTEIN)</scope>
    <scope>FUNCTION (LARGE CAPSID PROTEIN)</scope>
    <scope>FUNCTION (MATURE SMALL CAPSID PROTEIN)</scope>
    <scope>SUBCELLULAR LOCATION (LARGE CAPSID PROTEIN)</scope>
    <scope>SUBCELLULAR LOCATION (MATURE SMALL CAPSID PROTEIN)</scope>
</reference>
<reference evidence="27" key="22">
    <citation type="journal article" date="2016" name="Structure">
        <title>Crystal Structure and Proteomics Analysis of Empty Virus-like Particles of Cowpea Mosaic Virus.</title>
        <authorList>
            <person name="Huynh N.T."/>
            <person name="Hesketh E.L."/>
            <person name="Saxena P."/>
            <person name="Meshcheriakova Y."/>
            <person name="Ku Y.C."/>
            <person name="Hoang L.T."/>
            <person name="Johnson J.E."/>
            <person name="Ranson N.A."/>
            <person name="Lomonossoff G.P."/>
            <person name="Reddy V.S."/>
        </authorList>
    </citation>
    <scope>X-RAY CRYSTALLOGRAPHY (2.30 ANGSTROMS) OF 460-833 AND 834-1046</scope>
    <scope>INTERACTION WITH THE MATURE SMALL CAPSID PROTEIN (LARGE CAPSID PROTEIN)</scope>
    <scope>INTERACTION WITH THE LARGE CAPSID PROTEIN (MATURE SMALL CAPSID PROTEIN)</scope>
    <scope>SUBUNIT (LARGE CAPSID PROTEIN)</scope>
    <scope>PROTEOLYTIC CLEAVAGE (SMALL CAPSID PROTEIN PRECURSOR)</scope>
    <scope>FUNCTION (LARGE CAPSID PROTEIN)</scope>
    <scope>FUNCTION (MATURE SMALL CAPSID PROTEIN)</scope>
    <scope>SUBCELLULAR LOCATION (LARGE CAPSID PROTEIN)</scope>
    <scope>SUBCELLULAR LOCATION (MATURE SMALL CAPSID PROTEIN)</scope>
</reference>
<reference key="23">
    <citation type="journal article" date="2017" name="Sci. Rep.">
        <title>The structures of a naturally empty cowpea mosaic virus particle and its genome-containing counterpart by cryo-electron microscopy.</title>
        <authorList>
            <person name="Hesketh E.L."/>
            <person name="Meshcheriakova Y."/>
            <person name="Thompson R.F."/>
            <person name="Lomonossoff G.P."/>
            <person name="Ranson N.A."/>
        </authorList>
    </citation>
    <scope>STRUCTURE BY ELECTRON MICROSCOPY (4.25 ANGSTROMS) OF 460-828 AND 834-1046</scope>
    <scope>MUTAGENESIS OF ASN-633</scope>
    <scope>INTERACTION WITH THE MATURE SMALL CAPSID PROTEIN (LARGE CAPSID PROTEIN)</scope>
    <scope>INTERACTION WITH THE LARGE CAPSID PROTEIN (MATURE SMALL CAPSID PROTEIN)</scope>
    <scope>SUBUNIT (LARGE CAPSID PROTEIN)</scope>
    <scope>FUNCTION (LARGE CAPSID PROTEIN)</scope>
    <scope>FUNCTION (MATURE SMALL CAPSID PROTEIN)</scope>
    <scope>SUBCELLULAR LOCATION (LARGE CAPSID PROTEIN)</scope>
    <scope>SUBCELLULAR LOCATION (MATURE SMALL CAPSID PROTEIN)</scope>
    <scope>DOMAIN (MATURE SMALL CAPSID PROTEIN)</scope>
    <scope>DOMAIN (LARGE CAPSID PROTEIN)</scope>
</reference>
<accession>P03599</accession>
<accession>Q66170</accession>
<accession>Q84103</accession>
<accession>Q9WJE1</accession>
<organismHost>
    <name type="scientific">Cajanus cajan</name>
    <name type="common">Pigeon pea</name>
    <name type="synonym">Cajanus indicus</name>
    <dbReference type="NCBI Taxonomy" id="3821"/>
</organismHost>
<organismHost>
    <name type="scientific">Crotalaria juncea</name>
    <name type="common">Sunn hemp</name>
    <dbReference type="NCBI Taxonomy" id="3829"/>
</organismHost>
<organismHost>
    <name type="scientific">Vigna unguiculata</name>
    <name type="common">Cowpea</name>
    <dbReference type="NCBI Taxonomy" id="3917"/>
</organismHost>
<name>POL2_CPMVS</name>
<keyword id="KW-0002">3D-structure</keyword>
<keyword id="KW-0007">Acetylation</keyword>
<keyword id="KW-0024">Alternative initiation</keyword>
<keyword id="KW-0167">Capsid protein</keyword>
<keyword id="KW-0238">DNA-binding</keyword>
<keyword id="KW-0342">GTP-binding</keyword>
<keyword id="KW-1031">Host cell junction</keyword>
<keyword id="KW-1048">Host nucleus</keyword>
<keyword id="KW-0945">Host-virus interaction</keyword>
<keyword id="KW-1090">Inhibition of host innate immune response by virus</keyword>
<keyword id="KW-0547">Nucleotide-binding</keyword>
<keyword id="KW-1185">Reference proteome</keyword>
<keyword id="KW-0694">RNA-binding</keyword>
<keyword id="KW-0941">Suppressor of RNA silencing</keyword>
<keyword id="KW-1142">T=3 icosahedral capsid protein</keyword>
<keyword id="KW-0813">Transport</keyword>
<keyword id="KW-0899">Viral immunoevasion</keyword>
<keyword id="KW-0916">Viral movement protein</keyword>
<keyword id="KW-0946">Virion</keyword>
<dbReference type="EMBL" id="X00729">
    <property type="protein sequence ID" value="CAA25314.1"/>
    <property type="molecule type" value="Genomic_RNA"/>
</dbReference>
<dbReference type="EMBL" id="X00729">
    <property type="protein sequence ID" value="CAA25315.1"/>
    <property type="molecule type" value="Genomic_RNA"/>
</dbReference>
<dbReference type="EMBL" id="X00729">
    <property type="protein sequence ID" value="CAA25317.1"/>
    <property type="molecule type" value="Genomic_RNA"/>
</dbReference>
<dbReference type="RefSeq" id="NP_613285.1">
    <property type="nucleotide sequence ID" value="NC_003550.1"/>
</dbReference>
<dbReference type="PDB" id="1NY7">
    <property type="method" value="X-ray"/>
    <property type="resolution" value="3.00 A"/>
    <property type="chains" value="1=834-1022, 2=460-828"/>
</dbReference>
<dbReference type="PDB" id="2BFU">
    <property type="method" value="X-ray"/>
    <property type="resolution" value="4.00 A"/>
    <property type="chains" value="L=460-828, S=834-1022"/>
</dbReference>
<dbReference type="PDB" id="5A32">
    <property type="method" value="EM"/>
    <property type="resolution" value="3.44 A"/>
    <property type="chains" value="A=834-1022, B=460-828"/>
</dbReference>
<dbReference type="PDB" id="5A33">
    <property type="method" value="EM"/>
    <property type="resolution" value="3.04 A"/>
    <property type="chains" value="A=834-1046, B=460-828"/>
</dbReference>
<dbReference type="PDB" id="5FMO">
    <property type="method" value="X-ray"/>
    <property type="resolution" value="2.30 A"/>
    <property type="chains" value="L=460-833, S=834-1046"/>
</dbReference>
<dbReference type="PDBsum" id="1NY7"/>
<dbReference type="PDBsum" id="2BFU"/>
<dbReference type="PDBsum" id="5A32"/>
<dbReference type="PDBsum" id="5A33"/>
<dbReference type="PDBsum" id="5FMO"/>
<dbReference type="EMDB" id="EMD-3562"/>
<dbReference type="EMDB" id="EMD-3565"/>
<dbReference type="EMDB" id="EMD-4610"/>
<dbReference type="SMR" id="P03599"/>
<dbReference type="iPTMnet" id="P03599"/>
<dbReference type="GeneID" id="956626"/>
<dbReference type="KEGG" id="vg:956626"/>
<dbReference type="KEGG" id="vg:956627"/>
<dbReference type="EvolutionaryTrace" id="P03599"/>
<dbReference type="Proteomes" id="UP000008589">
    <property type="component" value="Genome"/>
</dbReference>
<dbReference type="GO" id="GO:0042025">
    <property type="term" value="C:host cell nucleus"/>
    <property type="evidence" value="ECO:0007669"/>
    <property type="project" value="UniProtKB-SubCell"/>
</dbReference>
<dbReference type="GO" id="GO:0044219">
    <property type="term" value="C:host cell plasmodesma"/>
    <property type="evidence" value="ECO:0007669"/>
    <property type="project" value="UniProtKB-SubCell"/>
</dbReference>
<dbReference type="GO" id="GO:0039617">
    <property type="term" value="C:T=3 icosahedral viral capsid"/>
    <property type="evidence" value="ECO:0007669"/>
    <property type="project" value="UniProtKB-KW"/>
</dbReference>
<dbReference type="GO" id="GO:0003677">
    <property type="term" value="F:DNA binding"/>
    <property type="evidence" value="ECO:0007669"/>
    <property type="project" value="UniProtKB-KW"/>
</dbReference>
<dbReference type="GO" id="GO:0005525">
    <property type="term" value="F:GTP binding"/>
    <property type="evidence" value="ECO:0007669"/>
    <property type="project" value="UniProtKB-KW"/>
</dbReference>
<dbReference type="GO" id="GO:0003723">
    <property type="term" value="F:RNA binding"/>
    <property type="evidence" value="ECO:0007669"/>
    <property type="project" value="UniProtKB-KW"/>
</dbReference>
<dbReference type="GO" id="GO:0005198">
    <property type="term" value="F:structural molecule activity"/>
    <property type="evidence" value="ECO:0007669"/>
    <property type="project" value="InterPro"/>
</dbReference>
<dbReference type="GO" id="GO:0052170">
    <property type="term" value="P:symbiont-mediated suppression of host innate immune response"/>
    <property type="evidence" value="ECO:0007669"/>
    <property type="project" value="UniProtKB-KW"/>
</dbReference>
<dbReference type="GO" id="GO:0046740">
    <property type="term" value="P:transport of virus in host, cell to cell"/>
    <property type="evidence" value="ECO:0007669"/>
    <property type="project" value="UniProtKB-KW"/>
</dbReference>
<dbReference type="Gene3D" id="2.60.120.20">
    <property type="match status" value="2"/>
</dbReference>
<dbReference type="InterPro" id="IPR003181">
    <property type="entry name" value="Como_LCP"/>
</dbReference>
<dbReference type="InterPro" id="IPR003182">
    <property type="entry name" value="RNA2_polyprotein"/>
</dbReference>
<dbReference type="InterPro" id="IPR029053">
    <property type="entry name" value="Viral_coat"/>
</dbReference>
<dbReference type="Pfam" id="PF02247">
    <property type="entry name" value="Como_LCP"/>
    <property type="match status" value="1"/>
</dbReference>
<dbReference type="Pfam" id="PF02248">
    <property type="entry name" value="Como_SCP"/>
    <property type="match status" value="1"/>
</dbReference>
<dbReference type="SUPFAM" id="SSF88633">
    <property type="entry name" value="Positive stranded ssRNA viruses"/>
    <property type="match status" value="3"/>
</dbReference>
<protein>
    <recommendedName>
        <fullName>RNA2 polyprotein</fullName>
    </recommendedName>
    <alternativeName>
        <fullName>Genome polyprotein M</fullName>
    </alternativeName>
    <alternativeName>
        <fullName>M RNA polyprotein</fullName>
    </alternativeName>
    <alternativeName>
        <fullName>Middle component RNA polyprotein</fullName>
    </alternativeName>
    <alternativeName>
        <fullName>P2</fullName>
    </alternativeName>
    <component>
        <recommendedName>
            <fullName>VP58</fullName>
        </recommendedName>
        <alternativeName>
            <fullName>P58</fullName>
        </alternativeName>
    </component>
    <component>
        <recommendedName>
            <fullName>Movement protein</fullName>
            <shortName>MP</shortName>
        </recommendedName>
        <alternativeName>
            <fullName>48 kDa protein</fullName>
        </alternativeName>
    </component>
    <component>
        <recommendedName>
            <fullName>Large capsid protein</fullName>
            <shortName>LCP</shortName>
        </recommendedName>
        <alternativeName>
            <fullName>Coat protein VP37</fullName>
        </alternativeName>
        <alternativeName>
            <fullName>L subunit</fullName>
        </alternativeName>
        <alternativeName>
            <fullName>Large coat protein</fullName>
        </alternativeName>
    </component>
    <component>
        <recommendedName>
            <fullName>Small capsid protein precursor</fullName>
        </recommendedName>
        <alternativeName>
            <fullName>S subunit</fullName>
        </alternativeName>
    </component>
    <component>
        <recommendedName>
            <fullName>Mature small capsid protein</fullName>
            <shortName>SCP</shortName>
        </recommendedName>
        <alternativeName>
            <fullName>Coat protein VP23</fullName>
        </alternativeName>
        <alternativeName>
            <fullName>Small capsid protein, N-terminus part</fullName>
        </alternativeName>
        <alternativeName>
            <fullName>Small coat protein, N-terminus part</fullName>
        </alternativeName>
    </component>
    <component>
        <recommendedName>
            <fullName>Small capsid protein C-terminus part</fullName>
        </recommendedName>
        <alternativeName>
            <fullName>Small coat protein C-terminus part</fullName>
        </alternativeName>
    </component>
</protein>
<organism>
    <name type="scientific">Cowpea mosaic virus (strain SB)</name>
    <name type="common">CPMV</name>
    <dbReference type="NCBI Taxonomy" id="928299"/>
    <lineage>
        <taxon>Viruses</taxon>
        <taxon>Riboviria</taxon>
        <taxon>Orthornavirae</taxon>
        <taxon>Pisuviricota</taxon>
        <taxon>Pisoniviricetes</taxon>
        <taxon>Picornavirales</taxon>
        <taxon>Secoviridae</taxon>
        <taxon>Comovirinae</taxon>
        <taxon>Comovirus</taxon>
        <taxon>Comovirus vignae</taxon>
    </lineage>
</organism>
<proteinExistence type="evidence at protein level"/>
<feature type="chain" id="PRO_0000445839" description="RNA2 polyprotein">
    <location>
        <begin position="1"/>
        <end position="1046"/>
    </location>
</feature>
<feature type="chain" id="PRO_0000037024" description="VP58">
    <location>
        <begin position="1"/>
        <end position="459"/>
    </location>
</feature>
<feature type="chain" id="PRO_0000445840" description="Movement protein">
    <location>
        <begin position="118"/>
        <end position="459"/>
    </location>
</feature>
<feature type="chain" id="PRO_0000037025" description="Large capsid protein">
    <location>
        <begin position="460"/>
        <end position="833"/>
    </location>
</feature>
<feature type="chain" id="PRO_0000445841" description="Small capsid protein precursor">
    <location>
        <begin position="834"/>
        <end position="1046"/>
    </location>
</feature>
<feature type="chain" id="PRO_0000037026" description="Mature small capsid protein">
    <location>
        <begin position="834"/>
        <end position="1022"/>
    </location>
</feature>
<feature type="chain" id="PRO_0000037027" description="Small capsid protein C-terminus part">
    <location>
        <begin position="1023"/>
        <end position="1046"/>
    </location>
</feature>
<feature type="region of interest" description="Hydrophobic" evidence="2">
    <location>
        <begin position="62"/>
        <end position="84"/>
    </location>
</feature>
<feature type="region of interest" description="Involved in tubule formation by the movement protein" evidence="8">
    <location>
        <begin position="409"/>
        <end position="415"/>
    </location>
</feature>
<feature type="site" description="Cleavage; by viral protease" evidence="3">
    <location>
        <begin position="459"/>
        <end position="460"/>
    </location>
</feature>
<feature type="site" description="Interaction with the viral RNA" evidence="15">
    <location>
        <position position="476"/>
    </location>
</feature>
<feature type="site" description="Interaction with the viral RNA; probable role in viral RNA packaging" evidence="18">
    <location>
        <position position="633"/>
    </location>
</feature>
<feature type="site" description="Interaction with the viral RNA; probable role in viral RNA packaging" evidence="15 18">
    <location>
        <position position="649"/>
    </location>
</feature>
<feature type="site" description="Cleavage; by viral protease" evidence="3">
    <location>
        <begin position="833"/>
        <end position="834"/>
    </location>
</feature>
<feature type="site" description="Cleavage" evidence="16">
    <location>
        <begin position="1022"/>
        <end position="1023"/>
    </location>
</feature>
<feature type="site" description="Involved in viral capsid assembly and RNA binding" evidence="15">
    <location>
        <position position="1025"/>
    </location>
</feature>
<feature type="modified residue" description="N-acetylmethionine; by host" evidence="19">
    <location>
        <position position="460"/>
    </location>
</feature>
<feature type="splice variant" id="VSP_059978" description="In isoform 2.">
    <location>
        <begin position="1"/>
        <end position="117"/>
    </location>
</feature>
<feature type="mutagenesis site" description="No effect on the formation of tubules induced by the movement protein; No effect on infectivity." evidence="5">
    <original>IP</original>
    <variation>AA</variation>
    <location>
        <begin position="126"/>
        <end position="127"/>
    </location>
</feature>
<feature type="mutagenesis site" description="Strong decrease in the formation of tubules induced by the movement protein; complete loss of infectivity." evidence="5">
    <original>PV</original>
    <variation>AA</variation>
    <location>
        <begin position="209"/>
        <end position="210"/>
    </location>
</feature>
<feature type="mutagenesis site" description="No effect on the formation of tubules induced by the movement protein; No effect on infectivity." evidence="5">
    <original>SD</original>
    <variation>AA</variation>
    <location>
        <begin position="220"/>
        <end position="221"/>
    </location>
</feature>
<feature type="mutagenesis site" description="Complete loss of formation of tubules induced by the movement protein; No effect on infectivity." evidence="5">
    <original>IE</original>
    <variation>AA</variation>
    <location>
        <begin position="238"/>
        <end position="239"/>
    </location>
</feature>
<feature type="mutagenesis site" description="Complete loss of formation of tubules induced by the movement protein and complete loss of GTP binding; No effect on infectivity." evidence="5 11">
    <original>VD</original>
    <variation>AA</variation>
    <location>
        <begin position="259"/>
        <end position="260"/>
    </location>
</feature>
<feature type="mutagenesis site" description="Complete loss of GTP binding; when associated with A-260." evidence="11">
    <original>V</original>
    <variation>A</variation>
    <location>
        <position position="259"/>
    </location>
</feature>
<feature type="mutagenesis site" description="Complete loss of GTP binding; when associated with A-259." evidence="11">
    <original>D</original>
    <variation>A</variation>
    <location>
        <position position="260"/>
    </location>
</feature>
<feature type="mutagenesis site" description="Complete loss of formation of tubules induced by the movement protein; No effect on infectivity." evidence="5">
    <original>RG</original>
    <variation>AA</variation>
    <location>
        <begin position="279"/>
        <end position="280"/>
    </location>
</feature>
<feature type="mutagenesis site" description="No effect on the formation of tubules induced by the movement protein; No effect on infectivity." evidence="5">
    <original>LK</original>
    <variation>AA</variation>
    <location>
        <begin position="409"/>
        <end position="410"/>
    </location>
</feature>
<feature type="mutagenesis site" description="No effect on the formation of tubules induced by the movement protein; No effect on infectivity." evidence="5">
    <original>LD</original>
    <variation>AA</variation>
    <location>
        <begin position="448"/>
        <end position="449"/>
    </location>
</feature>
<feature type="mutagenesis site" description="Complete loss of RNA packaging and decreased capsid assembly." evidence="15">
    <original>R</original>
    <variation>D</variation>
    <variation>E</variation>
    <location>
        <position position="476"/>
    </location>
</feature>
<feature type="mutagenesis site" description="No effect on viral yield and virus systemic transport." evidence="15">
    <original>R</original>
    <variation>G</variation>
    <variation>K</variation>
    <variation>W</variation>
    <location>
        <position position="476"/>
    </location>
</feature>
<feature type="mutagenesis site" description="Loss of hability to cause a systemic infection in the host plant; no effect on encapsidation." evidence="18">
    <original>N</original>
    <variation>A</variation>
    <location>
        <position position="633"/>
    </location>
</feature>
<feature type="mutagenesis site" description="Markedly reduced viral yield and loss of hability to cause a systemic infection in the host plant probably due to reduced RNA encapsidation." evidence="18">
    <original>N</original>
    <variation>D</variation>
    <location>
        <position position="633"/>
    </location>
</feature>
<feature type="mutagenesis site" description="No effect." evidence="15">
    <original>W</original>
    <variation>A</variation>
    <variation>D</variation>
    <location>
        <position position="649"/>
    </location>
</feature>
<feature type="mutagenesis site" description="Complete loss of viral RNA binding and capsid assembly." evidence="15">
    <original>W</original>
    <variation>F</variation>
    <location>
        <position position="649"/>
    </location>
</feature>
<feature type="mutagenesis site" description="Loss of capsid assembly." evidence="15">
    <original>V</original>
    <variation>W</variation>
    <location>
        <position position="942"/>
    </location>
</feature>
<feature type="mutagenesis site" description="Complete loss of capsid assembly." evidence="15">
    <original>E</original>
    <variation>R</variation>
    <location>
        <position position="980"/>
    </location>
</feature>
<feature type="mutagenesis site" description="Strongly reduces the efficiency of RNA packaging. No effect on particle assembly." evidence="15">
    <original>F</original>
    <variation>W</variation>
    <location>
        <position position="1025"/>
    </location>
</feature>
<feature type="mutagenesis site" description="Complete loss of capsid assembly." evidence="15">
    <original>R</original>
    <variation>D</variation>
    <location>
        <position position="1026"/>
    </location>
</feature>
<feature type="mutagenesis site" description="Slightly reduced viral particle yield." evidence="15">
    <original>F</original>
    <variation>W</variation>
    <location>
        <position position="1027"/>
    </location>
</feature>
<feature type="strand" evidence="31">
    <location>
        <begin position="465"/>
        <end position="467"/>
    </location>
</feature>
<feature type="helix" evidence="28">
    <location>
        <begin position="468"/>
        <end position="470"/>
    </location>
</feature>
<feature type="turn" evidence="31">
    <location>
        <begin position="479"/>
        <end position="481"/>
    </location>
</feature>
<feature type="strand" evidence="31">
    <location>
        <begin position="482"/>
        <end position="491"/>
    </location>
</feature>
<feature type="strand" evidence="31">
    <location>
        <begin position="499"/>
        <end position="505"/>
    </location>
</feature>
<feature type="helix" evidence="31">
    <location>
        <begin position="506"/>
        <end position="510"/>
    </location>
</feature>
<feature type="helix" evidence="31">
    <location>
        <begin position="518"/>
        <end position="522"/>
    </location>
</feature>
<feature type="strand" evidence="31">
    <location>
        <begin position="525"/>
        <end position="527"/>
    </location>
</feature>
<feature type="strand" evidence="31">
    <location>
        <begin position="529"/>
        <end position="536"/>
    </location>
</feature>
<feature type="strand" evidence="31">
    <location>
        <begin position="546"/>
        <end position="555"/>
    </location>
</feature>
<feature type="helix" evidence="31">
    <location>
        <begin position="563"/>
        <end position="566"/>
    </location>
</feature>
<feature type="strand" evidence="31">
    <location>
        <begin position="569"/>
        <end position="574"/>
    </location>
</feature>
<feature type="turn" evidence="31">
    <location>
        <begin position="576"/>
        <end position="578"/>
    </location>
</feature>
<feature type="strand" evidence="31">
    <location>
        <begin position="579"/>
        <end position="586"/>
    </location>
</feature>
<feature type="helix" evidence="31">
    <location>
        <begin position="597"/>
        <end position="602"/>
    </location>
</feature>
<feature type="strand" evidence="31">
    <location>
        <begin position="606"/>
        <end position="613"/>
    </location>
</feature>
<feature type="strand" evidence="31">
    <location>
        <begin position="623"/>
        <end position="635"/>
    </location>
</feature>
<feature type="strand" evidence="31">
    <location>
        <begin position="645"/>
        <end position="661"/>
    </location>
</feature>
<feature type="strand" evidence="31">
    <location>
        <begin position="663"/>
        <end position="665"/>
    </location>
</feature>
<feature type="strand" evidence="31">
    <location>
        <begin position="669"/>
        <end position="674"/>
    </location>
</feature>
<feature type="strand" evidence="28">
    <location>
        <begin position="680"/>
        <end position="682"/>
    </location>
</feature>
<feature type="strand" evidence="31">
    <location>
        <begin position="685"/>
        <end position="687"/>
    </location>
</feature>
<feature type="helix" evidence="31">
    <location>
        <begin position="690"/>
        <end position="695"/>
    </location>
</feature>
<feature type="strand" evidence="31">
    <location>
        <begin position="698"/>
        <end position="711"/>
    </location>
</feature>
<feature type="strand" evidence="31">
    <location>
        <begin position="721"/>
        <end position="726"/>
    </location>
</feature>
<feature type="helix" evidence="31">
    <location>
        <begin position="736"/>
        <end position="739"/>
    </location>
</feature>
<feature type="strand" evidence="31">
    <location>
        <begin position="742"/>
        <end position="745"/>
    </location>
</feature>
<feature type="strand" evidence="31">
    <location>
        <begin position="753"/>
        <end position="758"/>
    </location>
</feature>
<feature type="helix" evidence="31">
    <location>
        <begin position="760"/>
        <end position="762"/>
    </location>
</feature>
<feature type="strand" evidence="31">
    <location>
        <begin position="767"/>
        <end position="770"/>
    </location>
</feature>
<feature type="turn" evidence="31">
    <location>
        <begin position="777"/>
        <end position="779"/>
    </location>
</feature>
<feature type="strand" evidence="31">
    <location>
        <begin position="784"/>
        <end position="791"/>
    </location>
</feature>
<feature type="strand" evidence="31">
    <location>
        <begin position="796"/>
        <end position="798"/>
    </location>
</feature>
<feature type="strand" evidence="31">
    <location>
        <begin position="801"/>
        <end position="818"/>
    </location>
</feature>
<feature type="strand" evidence="31">
    <location>
        <begin position="846"/>
        <end position="851"/>
    </location>
</feature>
<feature type="strand" evidence="31">
    <location>
        <begin position="861"/>
        <end position="866"/>
    </location>
</feature>
<feature type="turn" evidence="31">
    <location>
        <begin position="867"/>
        <end position="869"/>
    </location>
</feature>
<feature type="strand" evidence="31">
    <location>
        <begin position="872"/>
        <end position="877"/>
    </location>
</feature>
<feature type="strand" evidence="31">
    <location>
        <begin position="881"/>
        <end position="884"/>
    </location>
</feature>
<feature type="helix" evidence="31">
    <location>
        <begin position="888"/>
        <end position="895"/>
    </location>
</feature>
<feature type="strand" evidence="31">
    <location>
        <begin position="896"/>
        <end position="911"/>
    </location>
</feature>
<feature type="helix" evidence="31">
    <location>
        <begin position="916"/>
        <end position="918"/>
    </location>
</feature>
<feature type="strand" evidence="31">
    <location>
        <begin position="923"/>
        <end position="929"/>
    </location>
</feature>
<feature type="strand" evidence="29">
    <location>
        <begin position="932"/>
        <end position="935"/>
    </location>
</feature>
<feature type="strand" evidence="31">
    <location>
        <begin position="938"/>
        <end position="943"/>
    </location>
</feature>
<feature type="strand" evidence="31">
    <location>
        <begin position="949"/>
        <end position="957"/>
    </location>
</feature>
<feature type="strand" evidence="31">
    <location>
        <begin position="960"/>
        <end position="963"/>
    </location>
</feature>
<feature type="turn" evidence="31">
    <location>
        <begin position="970"/>
        <end position="973"/>
    </location>
</feature>
<feature type="strand" evidence="31">
    <location>
        <begin position="978"/>
        <end position="984"/>
    </location>
</feature>
<feature type="turn" evidence="31">
    <location>
        <begin position="986"/>
        <end position="988"/>
    </location>
</feature>
<feature type="strand" evidence="31">
    <location>
        <begin position="989"/>
        <end position="998"/>
    </location>
</feature>
<feature type="strand" evidence="31">
    <location>
        <begin position="1003"/>
        <end position="1009"/>
    </location>
</feature>
<feature type="helix" evidence="30">
    <location>
        <begin position="1027"/>
        <end position="1032"/>
    </location>
</feature>
<sequence>MFSFTEAKSKISLWTRSAAPLNNVYLSYSCRCGLGKRKLAGGCCSAPYITCYDSADFRRVQYLYFCLTRYCCLYFFLLLLADWFYKKSSIFFETEFSRGFRTWRKIVKLLYILPKFEMESIMSRGIPSGILEEKAIQFKRAKEGNKPLKDEIPKPEDMYVSHTSKWNVLRKMSQKTVDLSKAAAGMGFINKHMLTGNILAQPTTVLDIPVTKDKTLAMASDFIRKENLKTSAIHIGAIEIIIQSFASPESDLMGGFLLVDSLHTDTANAIRSIFVAPMRGGRPVRVVTFPNTLAPVSCDLNNRFKLICSLPNCDIVQGSQVAEVSVNVAGCATSIEKSHTPSQLYTEEFEKEGAVVVEYLGRQTYCAQPSNLPTEEKLRSLKFDFHVEQPSVLKLSNSCNAHFVKGESLKYSISGKEAENHAVHATVVSREGASAAPKQYDPILGRVLDPRNGNVAFPQMEQNLFALSLDDTSSVRGSLLDTKFAQTRVLLSKAMAGGDVLLDEYLYDVVNGQDFRATVAFLRTHVITGKIKVTATTNISDNSGCCLMLAINSGVRGKYSTDVYTICSQDSMTWNPGCKKNFSFTFNPNPCGDSWSAEMISRSRVRMTVICVSGWTLSPTTDVIAKLDWSIVNEKCEPTIYHLADCQNWLPLNRWMGKLTFPQGVTSEVRRMPLSIGGGAGATQAFLANMPNSWISMWRYFRGELHFEVTKMSSPYIKATVTFLIAFGNLSDAFGFYESFPHRIVQFAEVEEKCTLVFSQQEFVTAWSTQVNPRTTLEADGCPYLYAIIHDSTTGTISGDFNLGVKLVGIKDFCGIGSNPGIDGSRLLGAIAQGPVCAEASDVYSPCMIASTPPAPFSDVTAVTFDLINGKITPVGDDNWNTHIYNPPIMNVLRTAAWKSGTIHVQLNVRGAGVKRADWDGQVFVYLRQSMNPESYDARTFVISQPGSAMLNFSFDIIGPNSGFEFAESPWANQTTWYLECVATNPRQIQQFEVNMRFDPNFRVAGNILMPPFPLSTETPPLLKFRFRDIERSKRSVMVGHTATAA</sequence>